<feature type="signal peptide" evidence="2">
    <location>
        <begin position="1"/>
        <end position="19"/>
    </location>
</feature>
<feature type="chain" id="PRO_0000237699" description="Endoplasmic reticulum vesicle protein 25">
    <location>
        <begin position="20"/>
        <end position="211"/>
    </location>
</feature>
<feature type="topological domain" description="Lumenal" evidence="2">
    <location>
        <begin position="20"/>
        <end position="180"/>
    </location>
</feature>
<feature type="transmembrane region" description="Helical" evidence="2">
    <location>
        <begin position="181"/>
        <end position="201"/>
    </location>
</feature>
<feature type="topological domain" description="Cytoplasmic" evidence="2">
    <location>
        <begin position="202"/>
        <end position="211"/>
    </location>
</feature>
<feature type="domain" description="GOLD">
    <location>
        <begin position="33"/>
        <end position="121"/>
    </location>
</feature>
<dbReference type="EMBL" id="CR382131">
    <property type="protein sequence ID" value="CAG79854.1"/>
    <property type="molecule type" value="Genomic_DNA"/>
</dbReference>
<dbReference type="RefSeq" id="XP_504259.1">
    <property type="nucleotide sequence ID" value="XM_504259.1"/>
</dbReference>
<dbReference type="SMR" id="Q6C503"/>
<dbReference type="FunCoup" id="Q6C503">
    <property type="interactions" value="1180"/>
</dbReference>
<dbReference type="STRING" id="284591.Q6C503"/>
<dbReference type="EnsemblFungi" id="CAG79854">
    <property type="protein sequence ID" value="CAG79854"/>
    <property type="gene ID" value="YALI0_E22220g"/>
</dbReference>
<dbReference type="KEGG" id="yli:2912974"/>
<dbReference type="VEuPathDB" id="FungiDB:YALI0_E22220g"/>
<dbReference type="HOGENOM" id="CLU_066963_3_0_1"/>
<dbReference type="InParanoid" id="Q6C503"/>
<dbReference type="OMA" id="NIKHGVE"/>
<dbReference type="OrthoDB" id="110641at4891"/>
<dbReference type="Proteomes" id="UP000001300">
    <property type="component" value="Chromosome E"/>
</dbReference>
<dbReference type="GO" id="GO:0030134">
    <property type="term" value="C:COPII-coated ER to Golgi transport vesicle"/>
    <property type="evidence" value="ECO:0000318"/>
    <property type="project" value="GO_Central"/>
</dbReference>
<dbReference type="GO" id="GO:0005783">
    <property type="term" value="C:endoplasmic reticulum"/>
    <property type="evidence" value="ECO:0000318"/>
    <property type="project" value="GO_Central"/>
</dbReference>
<dbReference type="GO" id="GO:0005789">
    <property type="term" value="C:endoplasmic reticulum membrane"/>
    <property type="evidence" value="ECO:0007669"/>
    <property type="project" value="UniProtKB-SubCell"/>
</dbReference>
<dbReference type="GO" id="GO:0005793">
    <property type="term" value="C:endoplasmic reticulum-Golgi intermediate compartment"/>
    <property type="evidence" value="ECO:0000318"/>
    <property type="project" value="GO_Central"/>
</dbReference>
<dbReference type="GO" id="GO:0005794">
    <property type="term" value="C:Golgi apparatus"/>
    <property type="evidence" value="ECO:0000318"/>
    <property type="project" value="GO_Central"/>
</dbReference>
<dbReference type="GO" id="GO:0000139">
    <property type="term" value="C:Golgi membrane"/>
    <property type="evidence" value="ECO:0007669"/>
    <property type="project" value="UniProtKB-SubCell"/>
</dbReference>
<dbReference type="GO" id="GO:0006888">
    <property type="term" value="P:endoplasmic reticulum to Golgi vesicle-mediated transport"/>
    <property type="evidence" value="ECO:0000318"/>
    <property type="project" value="GO_Central"/>
</dbReference>
<dbReference type="GO" id="GO:0007030">
    <property type="term" value="P:Golgi organization"/>
    <property type="evidence" value="ECO:0000318"/>
    <property type="project" value="GO_Central"/>
</dbReference>
<dbReference type="GO" id="GO:0006886">
    <property type="term" value="P:intracellular protein transport"/>
    <property type="evidence" value="ECO:0000318"/>
    <property type="project" value="GO_Central"/>
</dbReference>
<dbReference type="InterPro" id="IPR015720">
    <property type="entry name" value="Emp24-like"/>
</dbReference>
<dbReference type="InterPro" id="IPR009038">
    <property type="entry name" value="GOLD_dom"/>
</dbReference>
<dbReference type="PANTHER" id="PTHR22811">
    <property type="entry name" value="TRANSMEMBRANE EMP24 DOMAIN-CONTAINING PROTEIN"/>
    <property type="match status" value="1"/>
</dbReference>
<dbReference type="Pfam" id="PF01105">
    <property type="entry name" value="EMP24_GP25L"/>
    <property type="match status" value="1"/>
</dbReference>
<dbReference type="SMART" id="SM01190">
    <property type="entry name" value="EMP24_GP25L"/>
    <property type="match status" value="1"/>
</dbReference>
<keyword id="KW-0256">Endoplasmic reticulum</keyword>
<keyword id="KW-0931">ER-Golgi transport</keyword>
<keyword id="KW-0333">Golgi apparatus</keyword>
<keyword id="KW-0472">Membrane</keyword>
<keyword id="KW-0653">Protein transport</keyword>
<keyword id="KW-1185">Reference proteome</keyword>
<keyword id="KW-0732">Signal</keyword>
<keyword id="KW-0812">Transmembrane</keyword>
<keyword id="KW-1133">Transmembrane helix</keyword>
<keyword id="KW-0813">Transport</keyword>
<accession>Q6C503</accession>
<proteinExistence type="inferred from homology"/>
<comment type="function">
    <text evidence="1">Constituent of COPII-coated endoplasmic reticulum-derived transport vesicles. Required for efficient transport of a subset of secretory proteins to the Golgi. Facilitates retrograde transport from the Golgi to the endoplasmic reticulum (By similarity).</text>
</comment>
<comment type="subcellular location">
    <subcellularLocation>
        <location evidence="1">Endoplasmic reticulum membrane</location>
        <topology evidence="1">Single-pass type I membrane protein</topology>
    </subcellularLocation>
    <subcellularLocation>
        <location evidence="1">Golgi apparatus membrane</location>
        <topology evidence="1">Single-pass type I membrane protein</topology>
    </subcellularLocation>
    <text evidence="1">Recycles between endoplasmic reticulum and Golgi.</text>
</comment>
<comment type="similarity">
    <text evidence="3">Belongs to the EMP24/GP25L family.</text>
</comment>
<sequence>MKSIVSVLTLLLLINAVAALRFVLPAKDKNELPFCVRDFVKNGELVVVTVESPKYADGQQLSVVVRDAHGNEYTRIKNVLGREITTFSSHQDTALDVCFHNVANSHQDLGKTKEIDLSVAIGANARDWEQIQASEKLKPAEVQLRKIEEIVDEVDKEMNYLKMREIRLRDTNESTNRRVKFFSVGITLALIALGVWQIIYLRSYFRSKHII</sequence>
<organism>
    <name type="scientific">Yarrowia lipolytica (strain CLIB 122 / E 150)</name>
    <name type="common">Yeast</name>
    <name type="synonym">Candida lipolytica</name>
    <dbReference type="NCBI Taxonomy" id="284591"/>
    <lineage>
        <taxon>Eukaryota</taxon>
        <taxon>Fungi</taxon>
        <taxon>Dikarya</taxon>
        <taxon>Ascomycota</taxon>
        <taxon>Saccharomycotina</taxon>
        <taxon>Dipodascomycetes</taxon>
        <taxon>Dipodascales</taxon>
        <taxon>Dipodascales incertae sedis</taxon>
        <taxon>Yarrowia</taxon>
    </lineage>
</organism>
<name>TMEDA_YARLI</name>
<protein>
    <recommendedName>
        <fullName>Endoplasmic reticulum vesicle protein 25</fullName>
    </recommendedName>
</protein>
<evidence type="ECO:0000250" key="1"/>
<evidence type="ECO:0000255" key="2"/>
<evidence type="ECO:0000305" key="3"/>
<gene>
    <name type="primary">ERV25</name>
    <name type="ordered locus">YALI0E22220g</name>
</gene>
<reference key="1">
    <citation type="journal article" date="2004" name="Nature">
        <title>Genome evolution in yeasts.</title>
        <authorList>
            <person name="Dujon B."/>
            <person name="Sherman D."/>
            <person name="Fischer G."/>
            <person name="Durrens P."/>
            <person name="Casaregola S."/>
            <person name="Lafontaine I."/>
            <person name="de Montigny J."/>
            <person name="Marck C."/>
            <person name="Neuveglise C."/>
            <person name="Talla E."/>
            <person name="Goffard N."/>
            <person name="Frangeul L."/>
            <person name="Aigle M."/>
            <person name="Anthouard V."/>
            <person name="Babour A."/>
            <person name="Barbe V."/>
            <person name="Barnay S."/>
            <person name="Blanchin S."/>
            <person name="Beckerich J.-M."/>
            <person name="Beyne E."/>
            <person name="Bleykasten C."/>
            <person name="Boisrame A."/>
            <person name="Boyer J."/>
            <person name="Cattolico L."/>
            <person name="Confanioleri F."/>
            <person name="de Daruvar A."/>
            <person name="Despons L."/>
            <person name="Fabre E."/>
            <person name="Fairhead C."/>
            <person name="Ferry-Dumazet H."/>
            <person name="Groppi A."/>
            <person name="Hantraye F."/>
            <person name="Hennequin C."/>
            <person name="Jauniaux N."/>
            <person name="Joyet P."/>
            <person name="Kachouri R."/>
            <person name="Kerrest A."/>
            <person name="Koszul R."/>
            <person name="Lemaire M."/>
            <person name="Lesur I."/>
            <person name="Ma L."/>
            <person name="Muller H."/>
            <person name="Nicaud J.-M."/>
            <person name="Nikolski M."/>
            <person name="Oztas S."/>
            <person name="Ozier-Kalogeropoulos O."/>
            <person name="Pellenz S."/>
            <person name="Potier S."/>
            <person name="Richard G.-F."/>
            <person name="Straub M.-L."/>
            <person name="Suleau A."/>
            <person name="Swennen D."/>
            <person name="Tekaia F."/>
            <person name="Wesolowski-Louvel M."/>
            <person name="Westhof E."/>
            <person name="Wirth B."/>
            <person name="Zeniou-Meyer M."/>
            <person name="Zivanovic Y."/>
            <person name="Bolotin-Fukuhara M."/>
            <person name="Thierry A."/>
            <person name="Bouchier C."/>
            <person name="Caudron B."/>
            <person name="Scarpelli C."/>
            <person name="Gaillardin C."/>
            <person name="Weissenbach J."/>
            <person name="Wincker P."/>
            <person name="Souciet J.-L."/>
        </authorList>
    </citation>
    <scope>NUCLEOTIDE SEQUENCE [LARGE SCALE GENOMIC DNA]</scope>
    <source>
        <strain>CLIB 122 / E 150</strain>
    </source>
</reference>